<protein>
    <recommendedName>
        <fullName>FACT complex subunit POB3</fullName>
    </recommendedName>
    <alternativeName>
        <fullName>Facilitates chromatin transcription complex subunit POB3</fullName>
    </alternativeName>
</protein>
<dbReference type="EMBL" id="CP017624">
    <property type="protein sequence ID" value="AOW27278.1"/>
    <property type="molecule type" value="Genomic_DNA"/>
</dbReference>
<dbReference type="RefSeq" id="XP_722602.1">
    <property type="nucleotide sequence ID" value="XM_717509.1"/>
</dbReference>
<dbReference type="SMR" id="Q5ALL8"/>
<dbReference type="BioGRID" id="1218921">
    <property type="interactions" value="1"/>
</dbReference>
<dbReference type="FunCoup" id="Q5ALL8">
    <property type="interactions" value="1086"/>
</dbReference>
<dbReference type="STRING" id="237561.Q5ALL8"/>
<dbReference type="EnsemblFungi" id="C2_02380W_A-T">
    <property type="protein sequence ID" value="C2_02380W_A-T-p1"/>
    <property type="gene ID" value="C2_02380W_A"/>
</dbReference>
<dbReference type="GeneID" id="3635827"/>
<dbReference type="KEGG" id="cal:CAALFM_C202380WA"/>
<dbReference type="CGD" id="CAL0000189327">
    <property type="gene designation" value="POB3"/>
</dbReference>
<dbReference type="VEuPathDB" id="FungiDB:C2_02380W_A"/>
<dbReference type="eggNOG" id="KOG0526">
    <property type="taxonomic scope" value="Eukaryota"/>
</dbReference>
<dbReference type="HOGENOM" id="CLU_017374_3_0_1"/>
<dbReference type="InParanoid" id="Q5ALL8"/>
<dbReference type="OrthoDB" id="498543at2759"/>
<dbReference type="PRO" id="PR:Q5ALL8"/>
<dbReference type="Proteomes" id="UP000000559">
    <property type="component" value="Chromosome 2"/>
</dbReference>
<dbReference type="GO" id="GO:0000781">
    <property type="term" value="C:chromosome, telomeric region"/>
    <property type="evidence" value="ECO:0007669"/>
    <property type="project" value="GOC"/>
</dbReference>
<dbReference type="GO" id="GO:0035101">
    <property type="term" value="C:FACT complex"/>
    <property type="evidence" value="ECO:0000318"/>
    <property type="project" value="GO_Central"/>
</dbReference>
<dbReference type="GO" id="GO:0003677">
    <property type="term" value="F:DNA binding"/>
    <property type="evidence" value="ECO:0007669"/>
    <property type="project" value="InterPro"/>
</dbReference>
<dbReference type="GO" id="GO:0042393">
    <property type="term" value="F:histone binding"/>
    <property type="evidence" value="ECO:0000318"/>
    <property type="project" value="GO_Central"/>
</dbReference>
<dbReference type="GO" id="GO:0031491">
    <property type="term" value="F:nucleosome binding"/>
    <property type="evidence" value="ECO:0000318"/>
    <property type="project" value="GO_Central"/>
</dbReference>
<dbReference type="GO" id="GO:0009267">
    <property type="term" value="P:cellular response to starvation"/>
    <property type="evidence" value="ECO:0000315"/>
    <property type="project" value="CGD"/>
</dbReference>
<dbReference type="GO" id="GO:0006281">
    <property type="term" value="P:DNA repair"/>
    <property type="evidence" value="ECO:0007669"/>
    <property type="project" value="UniProtKB-KW"/>
</dbReference>
<dbReference type="GO" id="GO:0006335">
    <property type="term" value="P:DNA replication-dependent chromatin assembly"/>
    <property type="evidence" value="ECO:0007669"/>
    <property type="project" value="EnsemblFungi"/>
</dbReference>
<dbReference type="GO" id="GO:0006261">
    <property type="term" value="P:DNA-templated DNA replication"/>
    <property type="evidence" value="ECO:0007669"/>
    <property type="project" value="EnsemblFungi"/>
</dbReference>
<dbReference type="GO" id="GO:0030447">
    <property type="term" value="P:filamentous growth"/>
    <property type="evidence" value="ECO:0000315"/>
    <property type="project" value="CGD"/>
</dbReference>
<dbReference type="GO" id="GO:0036180">
    <property type="term" value="P:filamentous growth of a population of unicellular organisms in response to biotic stimulus"/>
    <property type="evidence" value="ECO:0000315"/>
    <property type="project" value="CGD"/>
</dbReference>
<dbReference type="GO" id="GO:0036170">
    <property type="term" value="P:filamentous growth of a population of unicellular organisms in response to starvation"/>
    <property type="evidence" value="ECO:0000315"/>
    <property type="project" value="CGD"/>
</dbReference>
<dbReference type="GO" id="GO:0034728">
    <property type="term" value="P:nucleosome organization"/>
    <property type="evidence" value="ECO:0007669"/>
    <property type="project" value="EnsemblFungi"/>
</dbReference>
<dbReference type="GO" id="GO:0031508">
    <property type="term" value="P:pericentric heterochromatin formation"/>
    <property type="evidence" value="ECO:0007669"/>
    <property type="project" value="EnsemblFungi"/>
</dbReference>
<dbReference type="GO" id="GO:0045899">
    <property type="term" value="P:positive regulation of RNA polymerase II transcription preinitiation complex assembly"/>
    <property type="evidence" value="ECO:0007669"/>
    <property type="project" value="EnsemblFungi"/>
</dbReference>
<dbReference type="GO" id="GO:0030466">
    <property type="term" value="P:silent mating-type cassette heterochromatin formation"/>
    <property type="evidence" value="ECO:0007669"/>
    <property type="project" value="EnsemblFungi"/>
</dbReference>
<dbReference type="GO" id="GO:0031509">
    <property type="term" value="P:subtelomeric heterochromatin formation"/>
    <property type="evidence" value="ECO:0007669"/>
    <property type="project" value="EnsemblFungi"/>
</dbReference>
<dbReference type="CDD" id="cd13230">
    <property type="entry name" value="PH1_SSRP1-like"/>
    <property type="match status" value="1"/>
</dbReference>
<dbReference type="CDD" id="cd13231">
    <property type="entry name" value="PH2_SSRP1-like"/>
    <property type="match status" value="1"/>
</dbReference>
<dbReference type="CDD" id="cd13229">
    <property type="entry name" value="PH_TFIIH"/>
    <property type="match status" value="1"/>
</dbReference>
<dbReference type="FunFam" id="2.30.29.150:FF:000001">
    <property type="entry name" value="Fact complex subunit ssrp1"/>
    <property type="match status" value="1"/>
</dbReference>
<dbReference type="FunFam" id="2.30.29.30:FF:000098">
    <property type="entry name" value="Fact complex subunit ssrp1"/>
    <property type="match status" value="1"/>
</dbReference>
<dbReference type="Gene3D" id="2.30.29.150">
    <property type="match status" value="1"/>
</dbReference>
<dbReference type="Gene3D" id="2.30.29.30">
    <property type="entry name" value="Pleckstrin-homology domain (PH domain)/Phosphotyrosine-binding domain (PTB)"/>
    <property type="match status" value="2"/>
</dbReference>
<dbReference type="Gene3D" id="2.30.29.220">
    <property type="entry name" value="Structure-specific recognition protein (SSRP1)"/>
    <property type="match status" value="1"/>
</dbReference>
<dbReference type="InterPro" id="IPR011993">
    <property type="entry name" value="PH-like_dom_sf"/>
</dbReference>
<dbReference type="InterPro" id="IPR013719">
    <property type="entry name" value="RTT106/SPT16-like_middle_dom"/>
</dbReference>
<dbReference type="InterPro" id="IPR050454">
    <property type="entry name" value="RTT106/SSRP1_HistChap/FACT"/>
</dbReference>
<dbReference type="InterPro" id="IPR048993">
    <property type="entry name" value="SSRP1-like_PH1"/>
</dbReference>
<dbReference type="InterPro" id="IPR000969">
    <property type="entry name" value="SSRP1/POB3"/>
</dbReference>
<dbReference type="InterPro" id="IPR035417">
    <property type="entry name" value="SSRP1/POB3_N"/>
</dbReference>
<dbReference type="InterPro" id="IPR024954">
    <property type="entry name" value="SSRP1_DD"/>
</dbReference>
<dbReference type="InterPro" id="IPR038167">
    <property type="entry name" value="SSRP1_sf"/>
</dbReference>
<dbReference type="PANTHER" id="PTHR45849">
    <property type="entry name" value="FACT COMPLEX SUBUNIT SSRP1"/>
    <property type="match status" value="1"/>
</dbReference>
<dbReference type="PANTHER" id="PTHR45849:SF1">
    <property type="entry name" value="FACT COMPLEX SUBUNIT SSRP1"/>
    <property type="match status" value="1"/>
</dbReference>
<dbReference type="Pfam" id="PF21103">
    <property type="entry name" value="PH1_SSRP1-like"/>
    <property type="match status" value="1"/>
</dbReference>
<dbReference type="Pfam" id="PF17292">
    <property type="entry name" value="POB3_N"/>
    <property type="match status" value="1"/>
</dbReference>
<dbReference type="Pfam" id="PF08512">
    <property type="entry name" value="Rttp106-like_middle"/>
    <property type="match status" value="1"/>
</dbReference>
<dbReference type="Pfam" id="PF03531">
    <property type="entry name" value="SSrecog"/>
    <property type="match status" value="1"/>
</dbReference>
<dbReference type="PRINTS" id="PR00887">
    <property type="entry name" value="SSRCOGNITION"/>
</dbReference>
<dbReference type="SMART" id="SM01287">
    <property type="entry name" value="Rtt106"/>
    <property type="match status" value="1"/>
</dbReference>
<dbReference type="SUPFAM" id="SSF50729">
    <property type="entry name" value="PH domain-like"/>
    <property type="match status" value="1"/>
</dbReference>
<organism>
    <name type="scientific">Candida albicans (strain SC5314 / ATCC MYA-2876)</name>
    <name type="common">Yeast</name>
    <dbReference type="NCBI Taxonomy" id="237561"/>
    <lineage>
        <taxon>Eukaryota</taxon>
        <taxon>Fungi</taxon>
        <taxon>Dikarya</taxon>
        <taxon>Ascomycota</taxon>
        <taxon>Saccharomycotina</taxon>
        <taxon>Pichiomycetes</taxon>
        <taxon>Debaryomycetaceae</taxon>
        <taxon>Candida/Lodderomyces clade</taxon>
        <taxon>Candida</taxon>
    </lineage>
</organism>
<reference key="1">
    <citation type="journal article" date="2004" name="Proc. Natl. Acad. Sci. U.S.A.">
        <title>The diploid genome sequence of Candida albicans.</title>
        <authorList>
            <person name="Jones T."/>
            <person name="Federspiel N.A."/>
            <person name="Chibana H."/>
            <person name="Dungan J."/>
            <person name="Kalman S."/>
            <person name="Magee B.B."/>
            <person name="Newport G."/>
            <person name="Thorstenson Y.R."/>
            <person name="Agabian N."/>
            <person name="Magee P.T."/>
            <person name="Davis R.W."/>
            <person name="Scherer S."/>
        </authorList>
    </citation>
    <scope>NUCLEOTIDE SEQUENCE [LARGE SCALE GENOMIC DNA]</scope>
    <source>
        <strain>SC5314 / ATCC MYA-2876</strain>
    </source>
</reference>
<reference key="2">
    <citation type="journal article" date="2007" name="Genome Biol.">
        <title>Assembly of the Candida albicans genome into sixteen supercontigs aligned on the eight chromosomes.</title>
        <authorList>
            <person name="van het Hoog M."/>
            <person name="Rast T.J."/>
            <person name="Martchenko M."/>
            <person name="Grindle S."/>
            <person name="Dignard D."/>
            <person name="Hogues H."/>
            <person name="Cuomo C."/>
            <person name="Berriman M."/>
            <person name="Scherer S."/>
            <person name="Magee B.B."/>
            <person name="Whiteway M."/>
            <person name="Chibana H."/>
            <person name="Nantel A."/>
            <person name="Magee P.T."/>
        </authorList>
    </citation>
    <scope>GENOME REANNOTATION</scope>
    <source>
        <strain>SC5314 / ATCC MYA-2876</strain>
    </source>
</reference>
<reference key="3">
    <citation type="journal article" date="2013" name="Genome Biol.">
        <title>Assembly of a phased diploid Candida albicans genome facilitates allele-specific measurements and provides a simple model for repeat and indel structure.</title>
        <authorList>
            <person name="Muzzey D."/>
            <person name="Schwartz K."/>
            <person name="Weissman J.S."/>
            <person name="Sherlock G."/>
        </authorList>
    </citation>
    <scope>NUCLEOTIDE SEQUENCE [LARGE SCALE GENOMIC DNA]</scope>
    <scope>GENOME REANNOTATION</scope>
    <source>
        <strain>SC5314 / ATCC MYA-2876</strain>
    </source>
</reference>
<feature type="chain" id="PRO_0000245202" description="FACT complex subunit POB3">
    <location>
        <begin position="1"/>
        <end position="538"/>
    </location>
</feature>
<feature type="region of interest" description="Disordered" evidence="3">
    <location>
        <begin position="467"/>
        <end position="538"/>
    </location>
</feature>
<feature type="compositionally biased region" description="Acidic residues" evidence="3">
    <location>
        <begin position="470"/>
        <end position="494"/>
    </location>
</feature>
<feature type="compositionally biased region" description="Acidic residues" evidence="3">
    <location>
        <begin position="502"/>
        <end position="521"/>
    </location>
</feature>
<feature type="compositionally biased region" description="Basic and acidic residues" evidence="3">
    <location>
        <begin position="522"/>
        <end position="531"/>
    </location>
</feature>
<name>POB3_CANAL</name>
<comment type="function">
    <text evidence="1">Component of the FACT complex, a general chromatin factor that acts to reorganize nucleosomes. The FACT complex is involved in multiple processes that require DNA as a template such as mRNA elongation, DNA replication and DNA repair. During transcription elongation the FACT complex acts as a histone chaperone that both destabilizes and restores nucleosomal structure. It facilitates the passage of RNA polymerase II and transcription by promoting the dissociation of one histone H2A-H2B dimer from the nucleosome, then subsequently promotes the reestablishment of the nucleosome following the passage of RNA polymerase II (By similarity).</text>
</comment>
<comment type="subunit">
    <text evidence="1">Forms a stable heterodimer with SPT16. The SPT16-POB3 dimer weakly associates with multiple molecules of NHP6 to form the FACT complex (By similarity).</text>
</comment>
<comment type="subcellular location">
    <subcellularLocation>
        <location evidence="2">Nucleus</location>
    </subcellularLocation>
    <subcellularLocation>
        <location evidence="2">Chromosome</location>
    </subcellularLocation>
    <text evidence="2">Colocalizes with RNA polymerase II on chromatin. Recruited to actively transcribed loci.</text>
</comment>
<comment type="miscellaneous">
    <text>In contrast to the orthologous protein in animals and plants, this protein does not contain a HMG box DNA-binding domain. This function may instead be provided by the HMG box of the associated NHP6 protein in the FACT complex of fungi.</text>
</comment>
<comment type="similarity">
    <text evidence="4">Belongs to the SSRP1 family.</text>
</comment>
<accession>Q5ALL8</accession>
<accession>A0A1D8PGK5</accession>
<sequence length="538" mass="60895">MVNTDFEKIYLNQSRAGGRMRIAESGLGWKASASSGSTSQPFLLPREEILIASWSRGSKGYELRVQTKNKGVVSLDGFDHDDFTQLKQELTRNFHINLEHREHSLRGWNWGKTDLARNELIFNVNNKPAFEIPYSDISNSNLTGKNEVALEFNLDNNKNGDEIVEMRFYVPGTIENETTIVKNETNGDVIEEAVVNETSAAQQFYEQLKDKADIGQVAGEAIVSFSDVLFLTPRGRYDIDMYPSSLRLRGKTYDYKIQYEQIERIFSLPKPDETHHLIVLQIDPPLRQGQTRYPFLVLQFVKDEETELELNVSDEDFEKKYKDRLKKTYDAPTNVVMSHCLRGLTERKLITPGAFQSRYLQAGVPCSVKASEGYLFPLDRCFLFVTKPTLYIPYSEISSVVMSRTGGGVSASRTFDLEVNVIGSNQPHVFSNIDREEQEFIESFCKEKGVKVKNEEKIAKARLAKALEQEANDDDDEDADMGSAGDEDEDEDVDFQSGSDSDVAEEFDSDAAPSSDDDEEMADSKETDDRPPKKKAKN</sequence>
<keyword id="KW-0158">Chromosome</keyword>
<keyword id="KW-0227">DNA damage</keyword>
<keyword id="KW-0234">DNA repair</keyword>
<keyword id="KW-0235">DNA replication</keyword>
<keyword id="KW-0539">Nucleus</keyword>
<keyword id="KW-1185">Reference proteome</keyword>
<keyword id="KW-0804">Transcription</keyword>
<keyword id="KW-0805">Transcription regulation</keyword>
<gene>
    <name type="primary">POB3</name>
    <name type="ordered locus">CAALFM_C202380WA</name>
    <name type="ORF">CaO19.1560</name>
    <name type="ORF">CaO19.9133</name>
</gene>
<evidence type="ECO:0000250" key="1"/>
<evidence type="ECO:0000250" key="2">
    <source>
        <dbReference type="UniProtKB" id="Q04636"/>
    </source>
</evidence>
<evidence type="ECO:0000256" key="3">
    <source>
        <dbReference type="SAM" id="MobiDB-lite"/>
    </source>
</evidence>
<evidence type="ECO:0000305" key="4"/>
<proteinExistence type="inferred from homology"/>